<proteinExistence type="inferred from homology"/>
<organism>
    <name type="scientific">Burkholderia mallei (strain NCTC 10229)</name>
    <dbReference type="NCBI Taxonomy" id="412022"/>
    <lineage>
        <taxon>Bacteria</taxon>
        <taxon>Pseudomonadati</taxon>
        <taxon>Pseudomonadota</taxon>
        <taxon>Betaproteobacteria</taxon>
        <taxon>Burkholderiales</taxon>
        <taxon>Burkholderiaceae</taxon>
        <taxon>Burkholderia</taxon>
        <taxon>pseudomallei group</taxon>
    </lineage>
</organism>
<name>GCST_BURM9</name>
<feature type="chain" id="PRO_1000047649" description="Aminomethyltransferase">
    <location>
        <begin position="1"/>
        <end position="372"/>
    </location>
</feature>
<comment type="function">
    <text evidence="1">The glycine cleavage system catalyzes the degradation of glycine.</text>
</comment>
<comment type="catalytic activity">
    <reaction evidence="1">
        <text>N(6)-[(R)-S(8)-aminomethyldihydrolipoyl]-L-lysyl-[protein] + (6S)-5,6,7,8-tetrahydrofolate = N(6)-[(R)-dihydrolipoyl]-L-lysyl-[protein] + (6R)-5,10-methylene-5,6,7,8-tetrahydrofolate + NH4(+)</text>
        <dbReference type="Rhea" id="RHEA:16945"/>
        <dbReference type="Rhea" id="RHEA-COMP:10475"/>
        <dbReference type="Rhea" id="RHEA-COMP:10492"/>
        <dbReference type="ChEBI" id="CHEBI:15636"/>
        <dbReference type="ChEBI" id="CHEBI:28938"/>
        <dbReference type="ChEBI" id="CHEBI:57453"/>
        <dbReference type="ChEBI" id="CHEBI:83100"/>
        <dbReference type="ChEBI" id="CHEBI:83143"/>
        <dbReference type="EC" id="2.1.2.10"/>
    </reaction>
</comment>
<comment type="subunit">
    <text evidence="1">The glycine cleavage system is composed of four proteins: P, T, L and H.</text>
</comment>
<comment type="similarity">
    <text evidence="1">Belongs to the GcvT family.</text>
</comment>
<evidence type="ECO:0000255" key="1">
    <source>
        <dbReference type="HAMAP-Rule" id="MF_00259"/>
    </source>
</evidence>
<dbReference type="EC" id="2.1.2.10" evidence="1"/>
<dbReference type="EMBL" id="CP000546">
    <property type="protein sequence ID" value="ABN02404.1"/>
    <property type="molecule type" value="Genomic_DNA"/>
</dbReference>
<dbReference type="RefSeq" id="WP_004202927.1">
    <property type="nucleotide sequence ID" value="NC_008836.1"/>
</dbReference>
<dbReference type="SMR" id="A2S6F4"/>
<dbReference type="GeneID" id="93061983"/>
<dbReference type="KEGG" id="bml:BMA10229_A1542"/>
<dbReference type="HOGENOM" id="CLU_007884_10_2_4"/>
<dbReference type="Proteomes" id="UP000002283">
    <property type="component" value="Chromosome I"/>
</dbReference>
<dbReference type="GO" id="GO:0005829">
    <property type="term" value="C:cytosol"/>
    <property type="evidence" value="ECO:0007669"/>
    <property type="project" value="TreeGrafter"/>
</dbReference>
<dbReference type="GO" id="GO:0005960">
    <property type="term" value="C:glycine cleavage complex"/>
    <property type="evidence" value="ECO:0007669"/>
    <property type="project" value="InterPro"/>
</dbReference>
<dbReference type="GO" id="GO:0004047">
    <property type="term" value="F:aminomethyltransferase activity"/>
    <property type="evidence" value="ECO:0007669"/>
    <property type="project" value="UniProtKB-UniRule"/>
</dbReference>
<dbReference type="GO" id="GO:0008483">
    <property type="term" value="F:transaminase activity"/>
    <property type="evidence" value="ECO:0007669"/>
    <property type="project" value="UniProtKB-KW"/>
</dbReference>
<dbReference type="GO" id="GO:0019464">
    <property type="term" value="P:glycine decarboxylation via glycine cleavage system"/>
    <property type="evidence" value="ECO:0007669"/>
    <property type="project" value="UniProtKB-UniRule"/>
</dbReference>
<dbReference type="FunFam" id="3.30.70.1400:FF:000001">
    <property type="entry name" value="Aminomethyltransferase"/>
    <property type="match status" value="1"/>
</dbReference>
<dbReference type="FunFam" id="4.10.1250.10:FF:000001">
    <property type="entry name" value="Aminomethyltransferase"/>
    <property type="match status" value="1"/>
</dbReference>
<dbReference type="Gene3D" id="2.40.30.110">
    <property type="entry name" value="Aminomethyltransferase beta-barrel domains"/>
    <property type="match status" value="1"/>
</dbReference>
<dbReference type="Gene3D" id="3.30.70.1400">
    <property type="entry name" value="Aminomethyltransferase beta-barrel domains"/>
    <property type="match status" value="1"/>
</dbReference>
<dbReference type="Gene3D" id="4.10.1250.10">
    <property type="entry name" value="Aminomethyltransferase fragment"/>
    <property type="match status" value="1"/>
</dbReference>
<dbReference type="Gene3D" id="3.30.1360.120">
    <property type="entry name" value="Probable tRNA modification gtpase trme, domain 1"/>
    <property type="match status" value="1"/>
</dbReference>
<dbReference type="HAMAP" id="MF_00259">
    <property type="entry name" value="GcvT"/>
    <property type="match status" value="1"/>
</dbReference>
<dbReference type="InterPro" id="IPR006223">
    <property type="entry name" value="GCS_T"/>
</dbReference>
<dbReference type="InterPro" id="IPR022903">
    <property type="entry name" value="GCS_T_bac"/>
</dbReference>
<dbReference type="InterPro" id="IPR013977">
    <property type="entry name" value="GCST_C"/>
</dbReference>
<dbReference type="InterPro" id="IPR006222">
    <property type="entry name" value="GCV_T_N"/>
</dbReference>
<dbReference type="InterPro" id="IPR028896">
    <property type="entry name" value="GcvT/YgfZ/DmdA"/>
</dbReference>
<dbReference type="InterPro" id="IPR029043">
    <property type="entry name" value="GcvT/YgfZ_C"/>
</dbReference>
<dbReference type="InterPro" id="IPR027266">
    <property type="entry name" value="TrmE/GcvT_dom1"/>
</dbReference>
<dbReference type="NCBIfam" id="TIGR00528">
    <property type="entry name" value="gcvT"/>
    <property type="match status" value="1"/>
</dbReference>
<dbReference type="NCBIfam" id="NF001567">
    <property type="entry name" value="PRK00389.1"/>
    <property type="match status" value="1"/>
</dbReference>
<dbReference type="PANTHER" id="PTHR43757">
    <property type="entry name" value="AMINOMETHYLTRANSFERASE"/>
    <property type="match status" value="1"/>
</dbReference>
<dbReference type="PANTHER" id="PTHR43757:SF2">
    <property type="entry name" value="AMINOMETHYLTRANSFERASE, MITOCHONDRIAL"/>
    <property type="match status" value="1"/>
</dbReference>
<dbReference type="Pfam" id="PF01571">
    <property type="entry name" value="GCV_T"/>
    <property type="match status" value="1"/>
</dbReference>
<dbReference type="Pfam" id="PF08669">
    <property type="entry name" value="GCV_T_C"/>
    <property type="match status" value="1"/>
</dbReference>
<dbReference type="PIRSF" id="PIRSF006487">
    <property type="entry name" value="GcvT"/>
    <property type="match status" value="1"/>
</dbReference>
<dbReference type="SUPFAM" id="SSF101790">
    <property type="entry name" value="Aminomethyltransferase beta-barrel domain"/>
    <property type="match status" value="1"/>
</dbReference>
<dbReference type="SUPFAM" id="SSF103025">
    <property type="entry name" value="Folate-binding domain"/>
    <property type="match status" value="1"/>
</dbReference>
<protein>
    <recommendedName>
        <fullName evidence="1">Aminomethyltransferase</fullName>
        <ecNumber evidence="1">2.1.2.10</ecNumber>
    </recommendedName>
    <alternativeName>
        <fullName evidence="1">Glycine cleavage system T protein</fullName>
    </alternativeName>
</protein>
<accession>A2S6F4</accession>
<keyword id="KW-0032">Aminotransferase</keyword>
<keyword id="KW-0808">Transferase</keyword>
<gene>
    <name evidence="1" type="primary">gcvT</name>
    <name type="ordered locus">BMA10229_A1542</name>
</gene>
<sequence length="372" mass="40093">MTVLKTTPLHAAHRALNARMVDFGGWDMPVNYGSQIEEHQAVRTDAGMFDVSHMCVVDFTGPRVRAFFEHAIANNVAKLQTPGKALYSCLLNPQGGVIDDLIVYYFTEEFFRVVVNAGTAEKDIAWFNQLNEQGGFGLTIAPRRDFAIVAAQGPNARAKVWDTVPCARAATSELKPFNAAQVAGTPFGDLTVARTGYTGEDGFEIIVPATHVEALWNALAERGVRPCGLGARDTLRLEAGMNLYGQDMDESVSPLDAGLAWTVDLSAPRAFVGRDALEAHGSRAAFVGLILQKENGRAGGVLRAHQKVATPHGEGEITSGTFSPSMQESIAFARVPKDVAIGDTVHVQIRDKQLPARVVKLPFVRNGKVLAA</sequence>
<reference key="1">
    <citation type="journal article" date="2010" name="Genome Biol. Evol.">
        <title>Continuing evolution of Burkholderia mallei through genome reduction and large-scale rearrangements.</title>
        <authorList>
            <person name="Losada L."/>
            <person name="Ronning C.M."/>
            <person name="DeShazer D."/>
            <person name="Woods D."/>
            <person name="Fedorova N."/>
            <person name="Kim H.S."/>
            <person name="Shabalina S.A."/>
            <person name="Pearson T.R."/>
            <person name="Brinkac L."/>
            <person name="Tan P."/>
            <person name="Nandi T."/>
            <person name="Crabtree J."/>
            <person name="Badger J."/>
            <person name="Beckstrom-Sternberg S."/>
            <person name="Saqib M."/>
            <person name="Schutzer S.E."/>
            <person name="Keim P."/>
            <person name="Nierman W.C."/>
        </authorList>
    </citation>
    <scope>NUCLEOTIDE SEQUENCE [LARGE SCALE GENOMIC DNA]</scope>
    <source>
        <strain>NCTC 10229</strain>
    </source>
</reference>